<comment type="catalytic activity">
    <reaction evidence="1">
        <text>tRNA(Arg) + L-arginine + ATP = L-arginyl-tRNA(Arg) + AMP + diphosphate</text>
        <dbReference type="Rhea" id="RHEA:20301"/>
        <dbReference type="Rhea" id="RHEA-COMP:9658"/>
        <dbReference type="Rhea" id="RHEA-COMP:9673"/>
        <dbReference type="ChEBI" id="CHEBI:30616"/>
        <dbReference type="ChEBI" id="CHEBI:32682"/>
        <dbReference type="ChEBI" id="CHEBI:33019"/>
        <dbReference type="ChEBI" id="CHEBI:78442"/>
        <dbReference type="ChEBI" id="CHEBI:78513"/>
        <dbReference type="ChEBI" id="CHEBI:456215"/>
        <dbReference type="EC" id="6.1.1.19"/>
    </reaction>
</comment>
<comment type="subunit">
    <text evidence="1">Monomer.</text>
</comment>
<comment type="subcellular location">
    <subcellularLocation>
        <location evidence="1">Cytoplasm</location>
    </subcellularLocation>
</comment>
<comment type="similarity">
    <text evidence="1">Belongs to the class-I aminoacyl-tRNA synthetase family.</text>
</comment>
<proteinExistence type="inferred from homology"/>
<reference key="1">
    <citation type="journal article" date="2006" name="DNA Res.">
        <title>Genome sequence of the cat pathogen, Chlamydophila felis.</title>
        <authorList>
            <person name="Azuma Y."/>
            <person name="Hirakawa H."/>
            <person name="Yamashita A."/>
            <person name="Cai Y."/>
            <person name="Rahman M.A."/>
            <person name="Suzuki H."/>
            <person name="Mitaku S."/>
            <person name="Toh H."/>
            <person name="Goto S."/>
            <person name="Murakami T."/>
            <person name="Sugi K."/>
            <person name="Hayashi H."/>
            <person name="Fukushi H."/>
            <person name="Hattori M."/>
            <person name="Kuhara S."/>
            <person name="Shirai M."/>
        </authorList>
    </citation>
    <scope>NUCLEOTIDE SEQUENCE [LARGE SCALE GENOMIC DNA]</scope>
    <source>
        <strain>Fe/C-56</strain>
    </source>
</reference>
<name>SYR_CHLFF</name>
<keyword id="KW-0030">Aminoacyl-tRNA synthetase</keyword>
<keyword id="KW-0067">ATP-binding</keyword>
<keyword id="KW-0963">Cytoplasm</keyword>
<keyword id="KW-0436">Ligase</keyword>
<keyword id="KW-0547">Nucleotide-binding</keyword>
<keyword id="KW-0648">Protein biosynthesis</keyword>
<feature type="chain" id="PRO_0000242006" description="Arginine--tRNA ligase">
    <location>
        <begin position="1"/>
        <end position="562"/>
    </location>
</feature>
<feature type="short sequence motif" description="'HIGH' region">
    <location>
        <begin position="122"/>
        <end position="132"/>
    </location>
</feature>
<organism>
    <name type="scientific">Chlamydia felis (strain Fe/C-56)</name>
    <name type="common">Chlamydophila felis</name>
    <dbReference type="NCBI Taxonomy" id="264202"/>
    <lineage>
        <taxon>Bacteria</taxon>
        <taxon>Pseudomonadati</taxon>
        <taxon>Chlamydiota</taxon>
        <taxon>Chlamydiia</taxon>
        <taxon>Chlamydiales</taxon>
        <taxon>Chlamydiaceae</taxon>
        <taxon>Chlamydia/Chlamydophila group</taxon>
        <taxon>Chlamydia</taxon>
    </lineage>
</organism>
<accession>Q253D1</accession>
<protein>
    <recommendedName>
        <fullName evidence="1">Arginine--tRNA ligase</fullName>
        <ecNumber evidence="1">6.1.1.19</ecNumber>
    </recommendedName>
    <alternativeName>
        <fullName evidence="1">Arginyl-tRNA synthetase</fullName>
        <shortName evidence="1">ArgRS</shortName>
    </alternativeName>
</protein>
<dbReference type="EC" id="6.1.1.19" evidence="1"/>
<dbReference type="EMBL" id="AP006861">
    <property type="protein sequence ID" value="BAE81607.1"/>
    <property type="molecule type" value="Genomic_DNA"/>
</dbReference>
<dbReference type="RefSeq" id="WP_011458382.1">
    <property type="nucleotide sequence ID" value="NC_007899.1"/>
</dbReference>
<dbReference type="SMR" id="Q253D1"/>
<dbReference type="STRING" id="264202.CF0835"/>
<dbReference type="KEGG" id="cfe:CF0835"/>
<dbReference type="eggNOG" id="COG0018">
    <property type="taxonomic scope" value="Bacteria"/>
</dbReference>
<dbReference type="HOGENOM" id="CLU_006406_5_1_0"/>
<dbReference type="OrthoDB" id="9805987at2"/>
<dbReference type="Proteomes" id="UP000001260">
    <property type="component" value="Chromosome"/>
</dbReference>
<dbReference type="GO" id="GO:0005737">
    <property type="term" value="C:cytoplasm"/>
    <property type="evidence" value="ECO:0007669"/>
    <property type="project" value="UniProtKB-SubCell"/>
</dbReference>
<dbReference type="GO" id="GO:0004814">
    <property type="term" value="F:arginine-tRNA ligase activity"/>
    <property type="evidence" value="ECO:0007669"/>
    <property type="project" value="UniProtKB-UniRule"/>
</dbReference>
<dbReference type="GO" id="GO:0005524">
    <property type="term" value="F:ATP binding"/>
    <property type="evidence" value="ECO:0007669"/>
    <property type="project" value="UniProtKB-UniRule"/>
</dbReference>
<dbReference type="GO" id="GO:0006420">
    <property type="term" value="P:arginyl-tRNA aminoacylation"/>
    <property type="evidence" value="ECO:0007669"/>
    <property type="project" value="UniProtKB-UniRule"/>
</dbReference>
<dbReference type="CDD" id="cd00671">
    <property type="entry name" value="ArgRS_core"/>
    <property type="match status" value="1"/>
</dbReference>
<dbReference type="FunFam" id="3.40.50.620:FF:000030">
    <property type="entry name" value="Arginine--tRNA ligase"/>
    <property type="match status" value="1"/>
</dbReference>
<dbReference type="FunFam" id="3.30.1360.70:FF:000002">
    <property type="entry name" value="arginine--tRNA ligase, cytoplasmic"/>
    <property type="match status" value="1"/>
</dbReference>
<dbReference type="FunFam" id="1.10.730.10:FF:000006">
    <property type="entry name" value="Arginyl-tRNA synthetase 2, mitochondrial"/>
    <property type="match status" value="1"/>
</dbReference>
<dbReference type="Gene3D" id="3.30.1360.70">
    <property type="entry name" value="Arginyl tRNA synthetase N-terminal domain"/>
    <property type="match status" value="1"/>
</dbReference>
<dbReference type="Gene3D" id="3.40.50.620">
    <property type="entry name" value="HUPs"/>
    <property type="match status" value="1"/>
</dbReference>
<dbReference type="Gene3D" id="1.10.730.10">
    <property type="entry name" value="Isoleucyl-tRNA Synthetase, Domain 1"/>
    <property type="match status" value="1"/>
</dbReference>
<dbReference type="HAMAP" id="MF_00123">
    <property type="entry name" value="Arg_tRNA_synth"/>
    <property type="match status" value="1"/>
</dbReference>
<dbReference type="InterPro" id="IPR001412">
    <property type="entry name" value="aa-tRNA-synth_I_CS"/>
</dbReference>
<dbReference type="InterPro" id="IPR001278">
    <property type="entry name" value="Arg-tRNA-ligase"/>
</dbReference>
<dbReference type="InterPro" id="IPR005148">
    <property type="entry name" value="Arg-tRNA-synth_N"/>
</dbReference>
<dbReference type="InterPro" id="IPR036695">
    <property type="entry name" value="Arg-tRNA-synth_N_sf"/>
</dbReference>
<dbReference type="InterPro" id="IPR035684">
    <property type="entry name" value="ArgRS_core"/>
</dbReference>
<dbReference type="InterPro" id="IPR008909">
    <property type="entry name" value="DALR_anticod-bd"/>
</dbReference>
<dbReference type="InterPro" id="IPR014729">
    <property type="entry name" value="Rossmann-like_a/b/a_fold"/>
</dbReference>
<dbReference type="InterPro" id="IPR009080">
    <property type="entry name" value="tRNAsynth_Ia_anticodon-bd"/>
</dbReference>
<dbReference type="NCBIfam" id="TIGR00456">
    <property type="entry name" value="argS"/>
    <property type="match status" value="1"/>
</dbReference>
<dbReference type="PANTHER" id="PTHR11956:SF5">
    <property type="entry name" value="ARGININE--TRNA LIGASE, CYTOPLASMIC"/>
    <property type="match status" value="1"/>
</dbReference>
<dbReference type="PANTHER" id="PTHR11956">
    <property type="entry name" value="ARGINYL-TRNA SYNTHETASE"/>
    <property type="match status" value="1"/>
</dbReference>
<dbReference type="Pfam" id="PF03485">
    <property type="entry name" value="Arg_tRNA_synt_N"/>
    <property type="match status" value="1"/>
</dbReference>
<dbReference type="Pfam" id="PF05746">
    <property type="entry name" value="DALR_1"/>
    <property type="match status" value="1"/>
</dbReference>
<dbReference type="Pfam" id="PF00750">
    <property type="entry name" value="tRNA-synt_1d"/>
    <property type="match status" value="1"/>
</dbReference>
<dbReference type="PRINTS" id="PR01038">
    <property type="entry name" value="TRNASYNTHARG"/>
</dbReference>
<dbReference type="SMART" id="SM01016">
    <property type="entry name" value="Arg_tRNA_synt_N"/>
    <property type="match status" value="1"/>
</dbReference>
<dbReference type="SMART" id="SM00836">
    <property type="entry name" value="DALR_1"/>
    <property type="match status" value="1"/>
</dbReference>
<dbReference type="SUPFAM" id="SSF47323">
    <property type="entry name" value="Anticodon-binding domain of a subclass of class I aminoacyl-tRNA synthetases"/>
    <property type="match status" value="1"/>
</dbReference>
<dbReference type="SUPFAM" id="SSF55190">
    <property type="entry name" value="Arginyl-tRNA synthetase (ArgRS), N-terminal 'additional' domain"/>
    <property type="match status" value="1"/>
</dbReference>
<dbReference type="SUPFAM" id="SSF52374">
    <property type="entry name" value="Nucleotidylyl transferase"/>
    <property type="match status" value="1"/>
</dbReference>
<dbReference type="PROSITE" id="PS00178">
    <property type="entry name" value="AA_TRNA_LIGASE_I"/>
    <property type="match status" value="1"/>
</dbReference>
<sequence>MTLLSYLSSLCREATLSAFPQVENPSPDITQSTKEHFGHYQCNDAMKLDRTLKMAPRAIAEAIVNNLPKDNFSSVEVAGAGFINFTFSKEFLKQRLETFSADLSSGFCVKDPKKIVIDFSSPNIAKDMHVGHLRSTIIGDCLARVFSFVGNDVLRLNHIGDWGTAFGMLITYLQEEASEDVGNLEDLTALYKKAHARFAEDVEFKKRSQANVVALQSGDPSALNLWKHICEISERAFQKIYDILGVAIEKRGESFYNPFLPEIIQDLENKKLITVSDNAKCVFHEGFSIPLMVQKSDGGYNYATTDLAAMRYRVEKDHADKIIIVTDMGQSLHFQLLEATALAAGYLRDKETFSHVGFGLVLDSEGKKFKTRSGENIKLKELLNTAVDQAVATLKEHRPEMSEEEISQRAPILGINAIKYADLSSHRVSDYVFSFEKMLRFEGNTAMFLLYAYVRIQGIKRRLNIEKLNLEAVVNIQEPAEEALALALLRFPEAIDVTLKELCPHFLTDYLYMLTNKFNAFFRDCHIEGSPYQQERLYLCALVEKTLATGMHLLGLQTLDRL</sequence>
<evidence type="ECO:0000255" key="1">
    <source>
        <dbReference type="HAMAP-Rule" id="MF_00123"/>
    </source>
</evidence>
<gene>
    <name evidence="1" type="primary">argS</name>
    <name type="ordered locus">CF0835</name>
</gene>